<protein>
    <recommendedName>
        <fullName evidence="1">Protein Rev</fullName>
    </recommendedName>
    <alternativeName>
        <fullName evidence="1">ART/TRS</fullName>
    </alternativeName>
    <alternativeName>
        <fullName evidence="1">Anti-repression transactivator</fullName>
    </alternativeName>
    <alternativeName>
        <fullName evidence="1">Regulator of expression of viral proteins</fullName>
    </alternativeName>
</protein>
<gene>
    <name evidence="1" type="primary">rev</name>
</gene>
<organismHost>
    <name type="scientific">Homo sapiens</name>
    <name type="common">Human</name>
    <dbReference type="NCBI Taxonomy" id="9606"/>
</organismHost>
<reference key="1">
    <citation type="journal article" date="1999" name="AIDS Res. Hum. Retroviruses">
        <title>Virtually full-length sequences of HIV type 1 subtype J reference strains.</title>
        <authorList>
            <person name="Laukkanen T."/>
            <person name="Albert J."/>
            <person name="Liitsola K."/>
            <person name="Green S.D."/>
            <person name="Carr J.K."/>
            <person name="Leitner T."/>
            <person name="McCutchan F.E."/>
            <person name="Salminen M.O."/>
        </authorList>
    </citation>
    <scope>NUCLEOTIDE SEQUENCE [GENOMIC DNA]</scope>
    <source>
        <strain>SE9173</strain>
    </source>
</reference>
<reference key="2">
    <citation type="journal article" date="1999" name="Arch. Biochem. Biophys.">
        <title>The ins and outs of HIV Rev.</title>
        <authorList>
            <person name="Hope T.J."/>
        </authorList>
    </citation>
    <scope>REVIEW</scope>
</reference>
<organism>
    <name type="scientific">Human immunodeficiency virus type 1 group M subtype J (isolate SE9173)</name>
    <name type="common">HIV-1</name>
    <dbReference type="NCBI Taxonomy" id="388904"/>
    <lineage>
        <taxon>Viruses</taxon>
        <taxon>Riboviria</taxon>
        <taxon>Pararnavirae</taxon>
        <taxon>Artverviricota</taxon>
        <taxon>Revtraviricetes</taxon>
        <taxon>Ortervirales</taxon>
        <taxon>Retroviridae</taxon>
        <taxon>Orthoretrovirinae</taxon>
        <taxon>Lentivirus</taxon>
        <taxon>Human immunodeficiency virus type 1</taxon>
    </lineage>
</organism>
<proteinExistence type="inferred from homology"/>
<dbReference type="EMBL" id="AF082395">
    <property type="protein sequence ID" value="AAD17773.1"/>
    <property type="molecule type" value="Genomic_DNA"/>
</dbReference>
<dbReference type="SMR" id="Q9WC67"/>
<dbReference type="Proteomes" id="UP000123434">
    <property type="component" value="Segment"/>
</dbReference>
<dbReference type="GO" id="GO:0030430">
    <property type="term" value="C:host cell cytoplasm"/>
    <property type="evidence" value="ECO:0007669"/>
    <property type="project" value="UniProtKB-SubCell"/>
</dbReference>
<dbReference type="GO" id="GO:0044196">
    <property type="term" value="C:host cell nucleolus"/>
    <property type="evidence" value="ECO:0007669"/>
    <property type="project" value="UniProtKB-SubCell"/>
</dbReference>
<dbReference type="GO" id="GO:0003700">
    <property type="term" value="F:DNA-binding transcription factor activity"/>
    <property type="evidence" value="ECO:0007669"/>
    <property type="project" value="UniProtKB-UniRule"/>
</dbReference>
<dbReference type="GO" id="GO:0003723">
    <property type="term" value="F:RNA binding"/>
    <property type="evidence" value="ECO:0007669"/>
    <property type="project" value="UniProtKB-UniRule"/>
</dbReference>
<dbReference type="GO" id="GO:0051028">
    <property type="term" value="P:mRNA transport"/>
    <property type="evidence" value="ECO:0007669"/>
    <property type="project" value="UniProtKB-UniRule"/>
</dbReference>
<dbReference type="GO" id="GO:0016032">
    <property type="term" value="P:viral process"/>
    <property type="evidence" value="ECO:0007669"/>
    <property type="project" value="UniProtKB-UniRule"/>
</dbReference>
<dbReference type="Gene3D" id="6.10.140.630">
    <property type="match status" value="1"/>
</dbReference>
<dbReference type="HAMAP" id="MF_04077">
    <property type="entry name" value="REV_HIV1"/>
    <property type="match status" value="1"/>
</dbReference>
<dbReference type="InterPro" id="IPR000625">
    <property type="entry name" value="REV_protein"/>
</dbReference>
<dbReference type="Pfam" id="PF00424">
    <property type="entry name" value="REV"/>
    <property type="match status" value="1"/>
</dbReference>
<sequence length="116" mass="12858">MAGRSGDNDDQLLLAVRIIKILYQSNPYSKPNGSRQARRNRRRRWRARQNQIDSISERILSSCLGRPAEPVPLQLPPIERLRLDCSEDCGNSGTQGVGDPQISGEPCMVLGAGTKE</sequence>
<name>REV_HV1S9</name>
<keyword id="KW-0014">AIDS</keyword>
<keyword id="KW-1035">Host cytoplasm</keyword>
<keyword id="KW-1048">Host nucleus</keyword>
<keyword id="KW-0945">Host-virus interaction</keyword>
<keyword id="KW-0488">Methylation</keyword>
<keyword id="KW-0509">mRNA transport</keyword>
<keyword id="KW-0597">Phosphoprotein</keyword>
<keyword id="KW-0694">RNA-binding</keyword>
<keyword id="KW-0813">Transport</keyword>
<comment type="function">
    <text evidence="1">Escorts unspliced or incompletely spliced viral pre-mRNAs (late transcripts) out of the nucleus of infected cells. These pre-mRNAs carry a recognition sequence called Rev responsive element (RRE) located in the env gene, that is not present in fully spliced viral mRNAs (early transcripts). This function is essential since most viral proteins are translated from unspliced or partially spliced pre-mRNAs which cannot exit the nucleus by the pathway used by fully processed cellular mRNAs. Rev itself is translated from a fully spliced mRNA that readily exits the nucleus. Rev's nuclear localization signal (NLS) binds directly to KPNB1/Importin beta-1 without previous binding to KPNA1/Importin alpha-1. KPNB1 binds to the GDP bound form of RAN (Ran-GDP) and targets Rev to the nucleus. In the nucleus, the conversion from Ran-GDP to Ran-GTP dissociates Rev from KPNB1 and allows Rev's binding to the RRE in viral pre-mRNAs. Rev multimerization on the RRE via cooperative assembly exposes its nuclear export signal (NES) to the surface. Rev can then form a complex with XPO1/CRM1 and Ran-GTP, leading to nuclear export of the complex. Conversion from Ran-GTP to Ran-GDP mediates dissociation of the Rev/RRE/XPO1/RAN complex, so that Rev can return to the nucleus for a subsequent round of export. Beside KPNB1, also seems to interact with TNPO1/Transportin-1, RANBP5/IPO5 and IPO7/RANBP7 for nuclear import. The nucleoporin-like HRB/RIP is an essential cofactor that probably indirectly interacts with Rev to release HIV RNAs from the perinuclear region to the cytoplasm.</text>
</comment>
<comment type="subunit">
    <text evidence="1">Homomultimer; when bound to the RRE. Multimeric assembly is essential for activity and may involve XPO1. Binds to human KPNB1, XPO1, TNPO1, RANBP5 and IPO7. Interacts with the viral Integrase. Interacts with human KHDRBS1. Interacts with human NAP1; this interaction decreases Rev multimerization and stimulates its activity. Interacts with human DEAD-box helicases DDX3 and DDX24; these interactions may serve for viral RNA export to the cytoplasm and packaging, respectively. Interacts with human PSIP1; this interaction may inhibit HIV-1 DNA integration by promoting dissociation of the Integrase-LEDGF/p75 complex.</text>
</comment>
<comment type="subcellular location">
    <subcellularLocation>
        <location evidence="1">Host nucleus</location>
        <location evidence="1">Host nucleolus</location>
    </subcellularLocation>
    <subcellularLocation>
        <location evidence="1">Host cytoplasm</location>
    </subcellularLocation>
    <text evidence="1">The presence of both nuclear import and nuclear export signals leads to continuous shuttling between the nucleus and cytoplasm.</text>
</comment>
<comment type="domain">
    <text evidence="1">The RNA-binding motif binds to the RRE, a 240 bp stem-and-loop structure present in incompletely spliced viral pre-mRNAs. This region also contains the NLS which mediates nuclear localization via KPNB1 binding and, when the N-terminal sequence is present, nucleolar targeting. These overlapping functions prevent Rev bound to RRE from undesirable return to the nucleus. When Rev binds the RRE, the NLS becomes masked while the NES remains accessible. The leucine-rich NES mediates binding to human XPO1.</text>
</comment>
<comment type="PTM">
    <text evidence="1">Asymmetrically arginine dimethylated at one site by host PRMT6. Methylation impairs the RNA-binding activity and export of viral RNA from the nucleus to the cytoplasm.</text>
</comment>
<comment type="PTM">
    <text evidence="1">Phosphorylated by protein kinase CK2. Presence of, and maybe binding to the N-terminus of the regulatory beta subunit of CK2 is necessary for CK2-mediated Rev's phosphorylation.</text>
</comment>
<comment type="miscellaneous">
    <text evidence="1">HIV-1 lineages are divided in three main groups, M (for Major), O (for Outlier), and N (for New, or Non-M, Non-O). The vast majority of strains found worldwide belong to the group M. Group O seems to be endemic to and largely confined to Cameroon and neighboring countries in West Central Africa, where these viruses represent a small minority of HIV-1 strains. The group N is represented by a limited number of isolates from Cameroonian persons. The group M is further subdivided in 9 clades or subtypes (A to D, F to H, J and K).</text>
</comment>
<comment type="similarity">
    <text evidence="1">Belongs to the HIV-1 REV protein family.</text>
</comment>
<feature type="chain" id="PRO_0000245004" description="Protein Rev">
    <location>
        <begin position="1"/>
        <end position="116"/>
    </location>
</feature>
<feature type="region of interest" description="Homomultimerization" evidence="1">
    <location>
        <begin position="18"/>
        <end position="26"/>
    </location>
</feature>
<feature type="region of interest" description="Disordered" evidence="2">
    <location>
        <begin position="26"/>
        <end position="48"/>
    </location>
</feature>
<feature type="short sequence motif" description="Nuclear localization signal and RNA-binding (RRE)" evidence="1">
    <location>
        <begin position="34"/>
        <end position="50"/>
    </location>
</feature>
<feature type="short sequence motif" description="Nuclear export signal and binding to XPO1" evidence="1">
    <location>
        <begin position="73"/>
        <end position="84"/>
    </location>
</feature>
<feature type="compositionally biased region" description="Basic residues" evidence="2">
    <location>
        <begin position="36"/>
        <end position="47"/>
    </location>
</feature>
<feature type="modified residue" description="Phosphoserine; by host CK2" evidence="1">
    <location>
        <position position="5"/>
    </location>
</feature>
<feature type="modified residue" description="Phosphoserine; by host" evidence="1">
    <location>
        <position position="92"/>
    </location>
</feature>
<evidence type="ECO:0000255" key="1">
    <source>
        <dbReference type="HAMAP-Rule" id="MF_04077"/>
    </source>
</evidence>
<evidence type="ECO:0000256" key="2">
    <source>
        <dbReference type="SAM" id="MobiDB-lite"/>
    </source>
</evidence>
<accession>Q9WC67</accession>